<proteinExistence type="inferred from homology"/>
<keyword id="KW-0333">Golgi apparatus</keyword>
<keyword id="KW-0472">Membrane</keyword>
<keyword id="KW-0653">Protein transport</keyword>
<keyword id="KW-1185">Reference proteome</keyword>
<keyword id="KW-0812">Transmembrane</keyword>
<keyword id="KW-1133">Transmembrane helix</keyword>
<keyword id="KW-0813">Transport</keyword>
<evidence type="ECO:0000250" key="1"/>
<evidence type="ECO:0000255" key="2"/>
<evidence type="ECO:0000305" key="3"/>
<feature type="chain" id="PRO_0000329301" description="Protein SYS1 homolog">
    <location>
        <begin position="1"/>
        <end position="157"/>
    </location>
</feature>
<feature type="transmembrane region" description="Helical" evidence="2">
    <location>
        <begin position="19"/>
        <end position="39"/>
    </location>
</feature>
<feature type="transmembrane region" description="Helical" evidence="2">
    <location>
        <begin position="65"/>
        <end position="85"/>
    </location>
</feature>
<feature type="transmembrane region" description="Helical" evidence="2">
    <location>
        <begin position="91"/>
        <end position="111"/>
    </location>
</feature>
<feature type="transmembrane region" description="Helical" evidence="2">
    <location>
        <begin position="112"/>
        <end position="132"/>
    </location>
</feature>
<organism>
    <name type="scientific">Nematostella vectensis</name>
    <name type="common">Starlet sea anemone</name>
    <dbReference type="NCBI Taxonomy" id="45351"/>
    <lineage>
        <taxon>Eukaryota</taxon>
        <taxon>Metazoa</taxon>
        <taxon>Cnidaria</taxon>
        <taxon>Anthozoa</taxon>
        <taxon>Hexacorallia</taxon>
        <taxon>Actiniaria</taxon>
        <taxon>Edwardsiidae</taxon>
        <taxon>Nematostella</taxon>
    </lineage>
</organism>
<sequence>MAAGFRTNVWDPVLIISQIIAIQCTFYISLGVWVLIVDYWSGSIHSLDQFFAYKELDISSLKGKLLMIAFCLNSLTGAMALWFIVKRAKQCLDFTTTAHIVHLVFCCIYAGFPFSWTWWLLNIICLALMAVIGEFVCMKTELKAIKVSAGSSGKNSV</sequence>
<protein>
    <recommendedName>
        <fullName>Protein SYS1 homolog</fullName>
    </recommendedName>
</protein>
<dbReference type="EMBL" id="DS469590">
    <property type="protein sequence ID" value="EDO40540.1"/>
    <property type="molecule type" value="Genomic_DNA"/>
</dbReference>
<dbReference type="RefSeq" id="XP_001632603.1">
    <property type="nucleotide sequence ID" value="XM_001632553.1"/>
</dbReference>
<dbReference type="SMR" id="A7S6Y0"/>
<dbReference type="STRING" id="45351.A7S6Y0"/>
<dbReference type="EnsemblMetazoa" id="EDO40540">
    <property type="protein sequence ID" value="EDO40540"/>
    <property type="gene ID" value="NEMVEDRAFT_v1g229542"/>
</dbReference>
<dbReference type="GeneID" id="5512228"/>
<dbReference type="KEGG" id="nve:5512228"/>
<dbReference type="eggNOG" id="KOG4697">
    <property type="taxonomic scope" value="Eukaryota"/>
</dbReference>
<dbReference type="HOGENOM" id="CLU_081382_2_1_1"/>
<dbReference type="InParanoid" id="A7S6Y0"/>
<dbReference type="OMA" id="EYEMVGM"/>
<dbReference type="OrthoDB" id="542931at2759"/>
<dbReference type="PhylomeDB" id="A7S6Y0"/>
<dbReference type="Proteomes" id="UP000001593">
    <property type="component" value="Unassembled WGS sequence"/>
</dbReference>
<dbReference type="GO" id="GO:0005829">
    <property type="term" value="C:cytosol"/>
    <property type="evidence" value="ECO:0007669"/>
    <property type="project" value="GOC"/>
</dbReference>
<dbReference type="GO" id="GO:0000139">
    <property type="term" value="C:Golgi membrane"/>
    <property type="evidence" value="ECO:0000318"/>
    <property type="project" value="GO_Central"/>
</dbReference>
<dbReference type="GO" id="GO:0005802">
    <property type="term" value="C:trans-Golgi network"/>
    <property type="evidence" value="ECO:0000318"/>
    <property type="project" value="GO_Central"/>
</dbReference>
<dbReference type="GO" id="GO:0006895">
    <property type="term" value="P:Golgi to endosome transport"/>
    <property type="evidence" value="ECO:0000318"/>
    <property type="project" value="GO_Central"/>
</dbReference>
<dbReference type="GO" id="GO:0043001">
    <property type="term" value="P:Golgi to plasma membrane protein transport"/>
    <property type="evidence" value="ECO:0000318"/>
    <property type="project" value="GO_Central"/>
</dbReference>
<dbReference type="GO" id="GO:0034067">
    <property type="term" value="P:protein localization to Golgi apparatus"/>
    <property type="evidence" value="ECO:0000318"/>
    <property type="project" value="GO_Central"/>
</dbReference>
<dbReference type="InterPro" id="IPR016973">
    <property type="entry name" value="Integral_membrane_SYS1"/>
</dbReference>
<dbReference type="InterPro" id="IPR019185">
    <property type="entry name" value="Integral_membrane_SYS1-rel"/>
</dbReference>
<dbReference type="PANTHER" id="PTHR12952:SF0">
    <property type="entry name" value="PROTEIN SYS1 HOMOLOG"/>
    <property type="match status" value="1"/>
</dbReference>
<dbReference type="PANTHER" id="PTHR12952">
    <property type="entry name" value="SYS1"/>
    <property type="match status" value="1"/>
</dbReference>
<dbReference type="Pfam" id="PF09801">
    <property type="entry name" value="SYS1"/>
    <property type="match status" value="1"/>
</dbReference>
<dbReference type="PIRSF" id="PIRSF031402">
    <property type="entry name" value="SYS1_homologue"/>
    <property type="match status" value="1"/>
</dbReference>
<reference key="1">
    <citation type="journal article" date="2007" name="Science">
        <title>Sea anemone genome reveals ancestral eumetazoan gene repertoire and genomic organization.</title>
        <authorList>
            <person name="Putnam N.H."/>
            <person name="Srivastava M."/>
            <person name="Hellsten U."/>
            <person name="Dirks B."/>
            <person name="Chapman J."/>
            <person name="Salamov A."/>
            <person name="Terry A."/>
            <person name="Shapiro H."/>
            <person name="Lindquist E."/>
            <person name="Kapitonov V.V."/>
            <person name="Jurka J."/>
            <person name="Genikhovich G."/>
            <person name="Grigoriev I.V."/>
            <person name="Lucas S.M."/>
            <person name="Steele R.E."/>
            <person name="Finnerty J.R."/>
            <person name="Technau U."/>
            <person name="Martindale M.Q."/>
            <person name="Rokhsar D.S."/>
        </authorList>
    </citation>
    <scope>NUCLEOTIDE SEQUENCE [LARGE SCALE GENOMIC DNA]</scope>
    <source>
        <strain>CH2 X CH6</strain>
    </source>
</reference>
<gene>
    <name type="primary">sys1</name>
    <name type="ORF">v1g229542</name>
</gene>
<comment type="function">
    <text evidence="1">Involved in protein trafficking.</text>
</comment>
<comment type="subcellular location">
    <subcellularLocation>
        <location evidence="1">Golgi apparatus membrane</location>
        <topology evidence="1">Multi-pass membrane protein</topology>
    </subcellularLocation>
</comment>
<comment type="similarity">
    <text evidence="3">Belongs to the SYS1 family.</text>
</comment>
<name>SYS1_NEMVE</name>
<accession>A7S6Y0</accession>